<accession>P60546</accession>
<accession>P24234</accession>
<accession>Q2M7W1</accession>
<keyword id="KW-0002">3D-structure</keyword>
<keyword id="KW-0067">ATP-binding</keyword>
<keyword id="KW-0963">Cytoplasm</keyword>
<keyword id="KW-0418">Kinase</keyword>
<keyword id="KW-0547">Nucleotide-binding</keyword>
<keyword id="KW-1185">Reference proteome</keyword>
<keyword id="KW-0808">Transferase</keyword>
<gene>
    <name type="primary">gmk</name>
    <name type="synonym">spoR</name>
    <name type="ordered locus">b3648</name>
    <name type="ordered locus">JW3623</name>
</gene>
<reference key="1">
    <citation type="journal article" date="1993" name="J. Biol. Chem.">
        <title>Guanylate kinase of Escherichia coli K-12.</title>
        <authorList>
            <person name="Gentry D."/>
            <person name="Bengra C."/>
            <person name="Ikehara K."/>
            <person name="Cashel M."/>
        </authorList>
    </citation>
    <scope>NUCLEOTIDE SEQUENCE [GENOMIC DNA]</scope>
    <scope>FUNCTION</scope>
    <scope>CATALYTIC ACTIVITY</scope>
    <scope>SUBUNIT</scope>
    <source>
        <strain>K12 / JM109 / ATCC 53323</strain>
    </source>
</reference>
<reference key="2">
    <citation type="journal article" date="1993" name="Genomics">
        <title>DNA sequence and analysis of 136 kilobases of the Escherichia coli genome: organizational symmetry around the origin of replication.</title>
        <authorList>
            <person name="Burland V.D."/>
            <person name="Plunkett G. III"/>
            <person name="Daniels D.L."/>
            <person name="Blattner F.R."/>
        </authorList>
    </citation>
    <scope>NUCLEOTIDE SEQUENCE [LARGE SCALE GENOMIC DNA]</scope>
    <source>
        <strain>K12 / MG1655 / ATCC 47076</strain>
    </source>
</reference>
<reference key="3">
    <citation type="journal article" date="1997" name="Science">
        <title>The complete genome sequence of Escherichia coli K-12.</title>
        <authorList>
            <person name="Blattner F.R."/>
            <person name="Plunkett G. III"/>
            <person name="Bloch C.A."/>
            <person name="Perna N.T."/>
            <person name="Burland V."/>
            <person name="Riley M."/>
            <person name="Collado-Vides J."/>
            <person name="Glasner J.D."/>
            <person name="Rode C.K."/>
            <person name="Mayhew G.F."/>
            <person name="Gregor J."/>
            <person name="Davis N.W."/>
            <person name="Kirkpatrick H.A."/>
            <person name="Goeden M.A."/>
            <person name="Rose D.J."/>
            <person name="Mau B."/>
            <person name="Shao Y."/>
        </authorList>
    </citation>
    <scope>NUCLEOTIDE SEQUENCE [LARGE SCALE GENOMIC DNA]</scope>
    <source>
        <strain>K12 / MG1655 / ATCC 47076</strain>
    </source>
</reference>
<reference key="4">
    <citation type="journal article" date="2006" name="Mol. Syst. Biol.">
        <title>Highly accurate genome sequences of Escherichia coli K-12 strains MG1655 and W3110.</title>
        <authorList>
            <person name="Hayashi K."/>
            <person name="Morooka N."/>
            <person name="Yamamoto Y."/>
            <person name="Fujita K."/>
            <person name="Isono K."/>
            <person name="Choi S."/>
            <person name="Ohtsubo E."/>
            <person name="Baba T."/>
            <person name="Wanner B.L."/>
            <person name="Mori H."/>
            <person name="Horiuchi T."/>
        </authorList>
    </citation>
    <scope>NUCLEOTIDE SEQUENCE [LARGE SCALE GENOMIC DNA]</scope>
    <source>
        <strain>K12 / W3110 / ATCC 27325 / DSM 5911</strain>
    </source>
</reference>
<organism>
    <name type="scientific">Escherichia coli (strain K12)</name>
    <dbReference type="NCBI Taxonomy" id="83333"/>
    <lineage>
        <taxon>Bacteria</taxon>
        <taxon>Pseudomonadati</taxon>
        <taxon>Pseudomonadota</taxon>
        <taxon>Gammaproteobacteria</taxon>
        <taxon>Enterobacterales</taxon>
        <taxon>Enterobacteriaceae</taxon>
        <taxon>Escherichia</taxon>
    </lineage>
</organism>
<proteinExistence type="evidence at protein level"/>
<protein>
    <recommendedName>
        <fullName>Guanylate kinase</fullName>
        <ecNumber evidence="2">2.7.4.8</ecNumber>
    </recommendedName>
    <alternativeName>
        <fullName>GMP kinase</fullName>
    </alternativeName>
</protein>
<dbReference type="EC" id="2.7.4.8" evidence="2"/>
<dbReference type="EMBL" id="M84400">
    <property type="protein sequence ID" value="AAB88711.1"/>
    <property type="molecule type" value="Genomic_DNA"/>
</dbReference>
<dbReference type="EMBL" id="L10328">
    <property type="protein sequence ID" value="AAA62001.1"/>
    <property type="molecule type" value="Genomic_DNA"/>
</dbReference>
<dbReference type="EMBL" id="U00096">
    <property type="protein sequence ID" value="AAC76672.1"/>
    <property type="molecule type" value="Genomic_DNA"/>
</dbReference>
<dbReference type="EMBL" id="AP009048">
    <property type="protein sequence ID" value="BAE77645.1"/>
    <property type="molecule type" value="Genomic_DNA"/>
</dbReference>
<dbReference type="PIR" id="S43041">
    <property type="entry name" value="KIECGU"/>
</dbReference>
<dbReference type="RefSeq" id="NP_418105.1">
    <property type="nucleotide sequence ID" value="NC_000913.3"/>
</dbReference>
<dbReference type="RefSeq" id="WP_001295237.1">
    <property type="nucleotide sequence ID" value="NZ_STEB01000024.1"/>
</dbReference>
<dbReference type="PDB" id="1S96">
    <property type="method" value="X-ray"/>
    <property type="resolution" value="2.00 A"/>
    <property type="chains" value="A/B=1-207"/>
</dbReference>
<dbReference type="PDB" id="2AN9">
    <property type="method" value="X-ray"/>
    <property type="resolution" value="2.35 A"/>
    <property type="chains" value="A/B=1-207"/>
</dbReference>
<dbReference type="PDB" id="2ANB">
    <property type="method" value="X-ray"/>
    <property type="resolution" value="2.90 A"/>
    <property type="chains" value="A=1-207"/>
</dbReference>
<dbReference type="PDB" id="2ANC">
    <property type="method" value="X-ray"/>
    <property type="resolution" value="3.20 A"/>
    <property type="chains" value="A/B/C/D/E/F=1-207"/>
</dbReference>
<dbReference type="PDB" id="2F3R">
    <property type="method" value="X-ray"/>
    <property type="resolution" value="2.50 A"/>
    <property type="chains" value="A/B=1-207"/>
</dbReference>
<dbReference type="PDB" id="2F3T">
    <property type="method" value="X-ray"/>
    <property type="resolution" value="3.16 A"/>
    <property type="chains" value="A/B/C/D/E/F=1-207"/>
</dbReference>
<dbReference type="PDBsum" id="1S96"/>
<dbReference type="PDBsum" id="2AN9"/>
<dbReference type="PDBsum" id="2ANB"/>
<dbReference type="PDBsum" id="2ANC"/>
<dbReference type="PDBsum" id="2F3R"/>
<dbReference type="PDBsum" id="2F3T"/>
<dbReference type="SMR" id="P60546"/>
<dbReference type="BioGRID" id="4262568">
    <property type="interactions" value="30"/>
</dbReference>
<dbReference type="FunCoup" id="P60546">
    <property type="interactions" value="741"/>
</dbReference>
<dbReference type="IntAct" id="P60546">
    <property type="interactions" value="5"/>
</dbReference>
<dbReference type="STRING" id="511145.b3648"/>
<dbReference type="ChEMBL" id="CHEMBL3309016"/>
<dbReference type="jPOST" id="P60546"/>
<dbReference type="PaxDb" id="511145-b3648"/>
<dbReference type="EnsemblBacteria" id="AAC76672">
    <property type="protein sequence ID" value="AAC76672"/>
    <property type="gene ID" value="b3648"/>
</dbReference>
<dbReference type="GeneID" id="93778363"/>
<dbReference type="GeneID" id="948163"/>
<dbReference type="KEGG" id="ecj:JW3623"/>
<dbReference type="KEGG" id="eco:b3648"/>
<dbReference type="KEGG" id="ecoc:C3026_19765"/>
<dbReference type="PATRIC" id="fig|511145.12.peg.3768"/>
<dbReference type="EchoBASE" id="EB0958"/>
<dbReference type="eggNOG" id="COG0194">
    <property type="taxonomic scope" value="Bacteria"/>
</dbReference>
<dbReference type="HOGENOM" id="CLU_001715_1_0_6"/>
<dbReference type="InParanoid" id="P60546"/>
<dbReference type="OMA" id="EWAVVHG"/>
<dbReference type="OrthoDB" id="9808150at2"/>
<dbReference type="PhylomeDB" id="P60546"/>
<dbReference type="BioCyc" id="EcoCyc:GUANYL-KIN-MONOMER"/>
<dbReference type="BioCyc" id="MetaCyc:GUANYL-KIN-MONOMER"/>
<dbReference type="BRENDA" id="2.7.4.8">
    <property type="organism ID" value="2026"/>
</dbReference>
<dbReference type="EvolutionaryTrace" id="P60546"/>
<dbReference type="PRO" id="PR:P60546"/>
<dbReference type="Proteomes" id="UP000000625">
    <property type="component" value="Chromosome"/>
</dbReference>
<dbReference type="GO" id="GO:0005829">
    <property type="term" value="C:cytosol"/>
    <property type="evidence" value="ECO:0000314"/>
    <property type="project" value="EcoCyc"/>
</dbReference>
<dbReference type="GO" id="GO:0005524">
    <property type="term" value="F:ATP binding"/>
    <property type="evidence" value="ECO:0007669"/>
    <property type="project" value="UniProtKB-UniRule"/>
</dbReference>
<dbReference type="GO" id="GO:0004385">
    <property type="term" value="F:guanylate kinase activity"/>
    <property type="evidence" value="ECO:0000314"/>
    <property type="project" value="EcoCyc"/>
</dbReference>
<dbReference type="GO" id="GO:0042802">
    <property type="term" value="F:identical protein binding"/>
    <property type="evidence" value="ECO:0000314"/>
    <property type="project" value="EcoCyc"/>
</dbReference>
<dbReference type="CDD" id="cd00071">
    <property type="entry name" value="GMPK"/>
    <property type="match status" value="1"/>
</dbReference>
<dbReference type="FunFam" id="3.40.50.300:FF:000084">
    <property type="entry name" value="Guanylate kinase"/>
    <property type="match status" value="1"/>
</dbReference>
<dbReference type="FunFam" id="3.30.63.10:FF:000002">
    <property type="entry name" value="Guanylate kinase 1"/>
    <property type="match status" value="1"/>
</dbReference>
<dbReference type="Gene3D" id="3.30.63.10">
    <property type="entry name" value="Guanylate Kinase phosphate binding domain"/>
    <property type="match status" value="1"/>
</dbReference>
<dbReference type="Gene3D" id="3.40.50.300">
    <property type="entry name" value="P-loop containing nucleotide triphosphate hydrolases"/>
    <property type="match status" value="1"/>
</dbReference>
<dbReference type="HAMAP" id="MF_00328">
    <property type="entry name" value="Guanylate_kinase"/>
    <property type="match status" value="1"/>
</dbReference>
<dbReference type="InterPro" id="IPR008145">
    <property type="entry name" value="GK/Ca_channel_bsu"/>
</dbReference>
<dbReference type="InterPro" id="IPR008144">
    <property type="entry name" value="Guanylate_kin-like_dom"/>
</dbReference>
<dbReference type="InterPro" id="IPR017665">
    <property type="entry name" value="Guanylate_kinase"/>
</dbReference>
<dbReference type="InterPro" id="IPR020590">
    <property type="entry name" value="Guanylate_kinase_CS"/>
</dbReference>
<dbReference type="InterPro" id="IPR027417">
    <property type="entry name" value="P-loop_NTPase"/>
</dbReference>
<dbReference type="NCBIfam" id="TIGR03263">
    <property type="entry name" value="guanyl_kin"/>
    <property type="match status" value="1"/>
</dbReference>
<dbReference type="PANTHER" id="PTHR23117:SF13">
    <property type="entry name" value="GUANYLATE KINASE"/>
    <property type="match status" value="1"/>
</dbReference>
<dbReference type="PANTHER" id="PTHR23117">
    <property type="entry name" value="GUANYLATE KINASE-RELATED"/>
    <property type="match status" value="1"/>
</dbReference>
<dbReference type="Pfam" id="PF00625">
    <property type="entry name" value="Guanylate_kin"/>
    <property type="match status" value="1"/>
</dbReference>
<dbReference type="SMART" id="SM00072">
    <property type="entry name" value="GuKc"/>
    <property type="match status" value="1"/>
</dbReference>
<dbReference type="SUPFAM" id="SSF52540">
    <property type="entry name" value="P-loop containing nucleoside triphosphate hydrolases"/>
    <property type="match status" value="1"/>
</dbReference>
<dbReference type="PROSITE" id="PS00856">
    <property type="entry name" value="GUANYLATE_KINASE_1"/>
    <property type="match status" value="1"/>
</dbReference>
<dbReference type="PROSITE" id="PS50052">
    <property type="entry name" value="GUANYLATE_KINASE_2"/>
    <property type="match status" value="1"/>
</dbReference>
<evidence type="ECO:0000250" key="1"/>
<evidence type="ECO:0000269" key="2">
    <source>
    </source>
</evidence>
<evidence type="ECO:0000305" key="3"/>
<evidence type="ECO:0000305" key="4">
    <source>
    </source>
</evidence>
<evidence type="ECO:0007829" key="5">
    <source>
        <dbReference type="PDB" id="1S96"/>
    </source>
</evidence>
<evidence type="ECO:0007829" key="6">
    <source>
        <dbReference type="PDB" id="2AN9"/>
    </source>
</evidence>
<evidence type="ECO:0007829" key="7">
    <source>
        <dbReference type="PDB" id="2ANB"/>
    </source>
</evidence>
<evidence type="ECO:0007829" key="8">
    <source>
        <dbReference type="PDB" id="2F3T"/>
    </source>
</evidence>
<comment type="function">
    <text evidence="2">Essential for recycling GMP and indirectly, cGMP.</text>
</comment>
<comment type="catalytic activity">
    <reaction evidence="2">
        <text>GMP + ATP = GDP + ADP</text>
        <dbReference type="Rhea" id="RHEA:20780"/>
        <dbReference type="ChEBI" id="CHEBI:30616"/>
        <dbReference type="ChEBI" id="CHEBI:58115"/>
        <dbReference type="ChEBI" id="CHEBI:58189"/>
        <dbReference type="ChEBI" id="CHEBI:456216"/>
        <dbReference type="EC" id="2.7.4.8"/>
    </reaction>
    <physiologicalReaction direction="left-to-right" evidence="4">
        <dbReference type="Rhea" id="RHEA:20781"/>
    </physiologicalReaction>
</comment>
<comment type="subunit">
    <text evidence="2">Homotetramer (under low ionic conditions) or homodimer (under high ionic conditions).</text>
</comment>
<comment type="subcellular location">
    <subcellularLocation>
        <location>Cytoplasm</location>
    </subcellularLocation>
</comment>
<comment type="similarity">
    <text evidence="3">Belongs to the guanylate kinase family.</text>
</comment>
<name>KGUA_ECOLI</name>
<sequence>MAQGTLYIVSAPSGAGKSSLIQALLKTQPLYDTQVSVSHTTRQPRPGEVHGEHYFFVNHDEFKEMISRDAFLEHAEVFGNYYGTSREAIEQVLATGVDVFLDIDWQGAQQIRQKMPHARSIFILPPSKIELDRRLRGRGQDSEEVIAKRMAQAVAEMSHYAEYDYLIVNDDFDTALTDLKTIIRAERLRMSRQKQRHDALISKLLAD</sequence>
<feature type="chain" id="PRO_0000170534" description="Guanylate kinase">
    <location>
        <begin position="1"/>
        <end position="207"/>
    </location>
</feature>
<feature type="domain" description="Guanylate kinase-like">
    <location>
        <begin position="4"/>
        <end position="184"/>
    </location>
</feature>
<feature type="binding site" evidence="1">
    <location>
        <begin position="11"/>
        <end position="18"/>
    </location>
    <ligand>
        <name>ATP</name>
        <dbReference type="ChEBI" id="CHEBI:30616"/>
    </ligand>
</feature>
<feature type="strand" evidence="5">
    <location>
        <begin position="6"/>
        <end position="10"/>
    </location>
</feature>
<feature type="strand" evidence="8">
    <location>
        <begin position="13"/>
        <end position="15"/>
    </location>
</feature>
<feature type="helix" evidence="5">
    <location>
        <begin position="17"/>
        <end position="27"/>
    </location>
</feature>
<feature type="turn" evidence="5">
    <location>
        <begin position="30"/>
        <end position="32"/>
    </location>
</feature>
<feature type="strand" evidence="5">
    <location>
        <begin position="33"/>
        <end position="35"/>
    </location>
</feature>
<feature type="strand" evidence="6">
    <location>
        <begin position="38"/>
        <end position="42"/>
    </location>
</feature>
<feature type="turn" evidence="5">
    <location>
        <begin position="50"/>
        <end position="52"/>
    </location>
</feature>
<feature type="strand" evidence="6">
    <location>
        <begin position="53"/>
        <end position="56"/>
    </location>
</feature>
<feature type="helix" evidence="5">
    <location>
        <begin position="59"/>
        <end position="67"/>
    </location>
</feature>
<feature type="strand" evidence="5">
    <location>
        <begin position="71"/>
        <end position="77"/>
    </location>
</feature>
<feature type="strand" evidence="5">
    <location>
        <begin position="80"/>
        <end position="85"/>
    </location>
</feature>
<feature type="helix" evidence="5">
    <location>
        <begin position="86"/>
        <end position="93"/>
    </location>
</feature>
<feature type="turn" evidence="5">
    <location>
        <begin position="94"/>
        <end position="96"/>
    </location>
</feature>
<feature type="strand" evidence="5">
    <location>
        <begin position="98"/>
        <end position="102"/>
    </location>
</feature>
<feature type="helix" evidence="5">
    <location>
        <begin position="105"/>
        <end position="114"/>
    </location>
</feature>
<feature type="strand" evidence="5">
    <location>
        <begin position="119"/>
        <end position="124"/>
    </location>
</feature>
<feature type="helix" evidence="5">
    <location>
        <begin position="128"/>
        <end position="136"/>
    </location>
</feature>
<feature type="strand" evidence="7">
    <location>
        <begin position="138"/>
        <end position="141"/>
    </location>
</feature>
<feature type="helix" evidence="5">
    <location>
        <begin position="143"/>
        <end position="157"/>
    </location>
</feature>
<feature type="helix" evidence="5">
    <location>
        <begin position="158"/>
        <end position="162"/>
    </location>
</feature>
<feature type="strand" evidence="5">
    <location>
        <begin position="163"/>
        <end position="168"/>
    </location>
</feature>
<feature type="helix" evidence="5">
    <location>
        <begin position="172"/>
        <end position="187"/>
    </location>
</feature>
<feature type="helix" evidence="5">
    <location>
        <begin position="190"/>
        <end position="196"/>
    </location>
</feature>
<feature type="helix" evidence="5">
    <location>
        <begin position="198"/>
        <end position="205"/>
    </location>
</feature>